<dbReference type="EMBL" id="L77117">
    <property type="protein sequence ID" value="AAB99090.1"/>
    <property type="molecule type" value="Genomic_DNA"/>
</dbReference>
<dbReference type="PIR" id="H64435">
    <property type="entry name" value="H64435"/>
</dbReference>
<dbReference type="SMR" id="Q58489"/>
<dbReference type="STRING" id="243232.MJ_1089"/>
<dbReference type="PaxDb" id="243232-MJ_1089"/>
<dbReference type="EnsemblBacteria" id="AAB99090">
    <property type="protein sequence ID" value="AAB99090"/>
    <property type="gene ID" value="MJ_1089"/>
</dbReference>
<dbReference type="KEGG" id="mja:MJ_1089"/>
<dbReference type="eggNOG" id="arCOG02249">
    <property type="taxonomic scope" value="Archaea"/>
</dbReference>
<dbReference type="HOGENOM" id="CLU_056469_5_0_2"/>
<dbReference type="InParanoid" id="Q58489"/>
<dbReference type="PhylomeDB" id="Q58489"/>
<dbReference type="Proteomes" id="UP000000805">
    <property type="component" value="Chromosome"/>
</dbReference>
<dbReference type="GO" id="GO:0043190">
    <property type="term" value="C:ATP-binding cassette (ABC) transporter complex"/>
    <property type="evidence" value="ECO:0000318"/>
    <property type="project" value="GO_Central"/>
</dbReference>
<dbReference type="GO" id="GO:0006824">
    <property type="term" value="P:cobalt ion transport"/>
    <property type="evidence" value="ECO:0000318"/>
    <property type="project" value="GO_Central"/>
</dbReference>
<dbReference type="CDD" id="cd16914">
    <property type="entry name" value="EcfT"/>
    <property type="match status" value="1"/>
</dbReference>
<dbReference type="InterPro" id="IPR003339">
    <property type="entry name" value="ABC/ECF_trnsptr_transmembrane"/>
</dbReference>
<dbReference type="InterPro" id="IPR052770">
    <property type="entry name" value="Cobalt_transport_CbiQ"/>
</dbReference>
<dbReference type="InterPro" id="IPR012809">
    <property type="entry name" value="ECF_CbiQ"/>
</dbReference>
<dbReference type="NCBIfam" id="TIGR02454">
    <property type="entry name" value="ECF_T_CbiQ"/>
    <property type="match status" value="1"/>
</dbReference>
<dbReference type="PANTHER" id="PTHR43723">
    <property type="entry name" value="COBALT TRANSPORT PROTEIN CBIQ"/>
    <property type="match status" value="1"/>
</dbReference>
<dbReference type="PANTHER" id="PTHR43723:SF1">
    <property type="entry name" value="COBALT TRANSPORT PROTEIN CBIQ"/>
    <property type="match status" value="1"/>
</dbReference>
<dbReference type="Pfam" id="PF02361">
    <property type="entry name" value="CbiQ"/>
    <property type="match status" value="1"/>
</dbReference>
<gene>
    <name type="ordered locus">MJ1089</name>
</gene>
<feature type="chain" id="PRO_0000107165" description="Uncharacterized protein MJ1089">
    <location>
        <begin position="1"/>
        <end position="268"/>
    </location>
</feature>
<feature type="transmembrane region" description="Helical" evidence="1">
    <location>
        <begin position="32"/>
        <end position="52"/>
    </location>
</feature>
<feature type="transmembrane region" description="Helical" evidence="1">
    <location>
        <begin position="70"/>
        <end position="90"/>
    </location>
</feature>
<feature type="transmembrane region" description="Helical" evidence="1">
    <location>
        <begin position="125"/>
        <end position="145"/>
    </location>
</feature>
<feature type="transmembrane region" description="Helical" evidence="1">
    <location>
        <begin position="237"/>
        <end position="257"/>
    </location>
</feature>
<protein>
    <recommendedName>
        <fullName>Uncharacterized protein MJ1089</fullName>
    </recommendedName>
</protein>
<sequence length="268" mass="30904">MGFMKHNIVDNVAFSNKLRHVNPKLKVIFALSLLLISVFSTSFIVPLIIFFINSILLLFKAKVPKKIYAVFVGIPLGFGILNLVIFAFLFGTVEWFKINVFGFEIPVYKDGIELGLLLFGRMLGGVSSMLFLAFTTPMVELFYIFRELKMPDVLVDMMMLIYRYIFVLYEEYEKMKFAQESRLGTSNLKSTYKSLGALAAHLFIRAWEKGEKLNITMMSRCYDGKIKLLQTIENPSIKYILFIAIFDIFLIILAYLTKDFTLTSYIKI</sequence>
<reference key="1">
    <citation type="journal article" date="1996" name="Science">
        <title>Complete genome sequence of the methanogenic archaeon, Methanococcus jannaschii.</title>
        <authorList>
            <person name="Bult C.J."/>
            <person name="White O."/>
            <person name="Olsen G.J."/>
            <person name="Zhou L."/>
            <person name="Fleischmann R.D."/>
            <person name="Sutton G.G."/>
            <person name="Blake J.A."/>
            <person name="FitzGerald L.M."/>
            <person name="Clayton R.A."/>
            <person name="Gocayne J.D."/>
            <person name="Kerlavage A.R."/>
            <person name="Dougherty B.A."/>
            <person name="Tomb J.-F."/>
            <person name="Adams M.D."/>
            <person name="Reich C.I."/>
            <person name="Overbeek R."/>
            <person name="Kirkness E.F."/>
            <person name="Weinstock K.G."/>
            <person name="Merrick J.M."/>
            <person name="Glodek A."/>
            <person name="Scott J.L."/>
            <person name="Geoghagen N.S.M."/>
            <person name="Weidman J.F."/>
            <person name="Fuhrmann J.L."/>
            <person name="Nguyen D."/>
            <person name="Utterback T.R."/>
            <person name="Kelley J.M."/>
            <person name="Peterson J.D."/>
            <person name="Sadow P.W."/>
            <person name="Hanna M.C."/>
            <person name="Cotton M.D."/>
            <person name="Roberts K.M."/>
            <person name="Hurst M.A."/>
            <person name="Kaine B.P."/>
            <person name="Borodovsky M."/>
            <person name="Klenk H.-P."/>
            <person name="Fraser C.M."/>
            <person name="Smith H.O."/>
            <person name="Woese C.R."/>
            <person name="Venter J.C."/>
        </authorList>
    </citation>
    <scope>NUCLEOTIDE SEQUENCE [LARGE SCALE GENOMIC DNA]</scope>
    <source>
        <strain>ATCC 43067 / DSM 2661 / JAL-1 / JCM 10045 / NBRC 100440</strain>
    </source>
</reference>
<proteinExistence type="inferred from homology"/>
<accession>Q58489</accession>
<organism>
    <name type="scientific">Methanocaldococcus jannaschii (strain ATCC 43067 / DSM 2661 / JAL-1 / JCM 10045 / NBRC 100440)</name>
    <name type="common">Methanococcus jannaschii</name>
    <dbReference type="NCBI Taxonomy" id="243232"/>
    <lineage>
        <taxon>Archaea</taxon>
        <taxon>Methanobacteriati</taxon>
        <taxon>Methanobacteriota</taxon>
        <taxon>Methanomada group</taxon>
        <taxon>Methanococci</taxon>
        <taxon>Methanococcales</taxon>
        <taxon>Methanocaldococcaceae</taxon>
        <taxon>Methanocaldococcus</taxon>
    </lineage>
</organism>
<keyword id="KW-1003">Cell membrane</keyword>
<keyword id="KW-0472">Membrane</keyword>
<keyword id="KW-1185">Reference proteome</keyword>
<keyword id="KW-0812">Transmembrane</keyword>
<keyword id="KW-1133">Transmembrane helix</keyword>
<name>Y1089_METJA</name>
<comment type="subcellular location">
    <subcellularLocation>
        <location evidence="2">Cell membrane</location>
        <topology evidence="2">Multi-pass membrane protein</topology>
    </subcellularLocation>
</comment>
<comment type="similarity">
    <text evidence="2">Belongs to the CbiQ family.</text>
</comment>
<evidence type="ECO:0000255" key="1"/>
<evidence type="ECO:0000305" key="2"/>